<keyword id="KW-0066">ATP synthesis</keyword>
<keyword id="KW-0139">CF(1)</keyword>
<keyword id="KW-0375">Hydrogen ion transport</keyword>
<keyword id="KW-0406">Ion transport</keyword>
<keyword id="KW-0472">Membrane</keyword>
<keyword id="KW-0496">Mitochondrion</keyword>
<keyword id="KW-0999">Mitochondrion inner membrane</keyword>
<keyword id="KW-1185">Reference proteome</keyword>
<keyword id="KW-0813">Transport</keyword>
<protein>
    <recommendedName>
        <fullName>Putative ATP synthase subunit epsilon, mitochondrial</fullName>
        <shortName>ATPase subunit epsilon</shortName>
    </recommendedName>
</protein>
<reference key="1">
    <citation type="journal article" date="2002" name="Nature">
        <title>The genome sequence of Schizosaccharomyces pombe.</title>
        <authorList>
            <person name="Wood V."/>
            <person name="Gwilliam R."/>
            <person name="Rajandream M.A."/>
            <person name="Lyne M.H."/>
            <person name="Lyne R."/>
            <person name="Stewart A."/>
            <person name="Sgouros J.G."/>
            <person name="Peat N."/>
            <person name="Hayles J."/>
            <person name="Baker S.G."/>
            <person name="Basham D."/>
            <person name="Bowman S."/>
            <person name="Brooks K."/>
            <person name="Brown D."/>
            <person name="Brown S."/>
            <person name="Chillingworth T."/>
            <person name="Churcher C.M."/>
            <person name="Collins M."/>
            <person name="Connor R."/>
            <person name="Cronin A."/>
            <person name="Davis P."/>
            <person name="Feltwell T."/>
            <person name="Fraser A."/>
            <person name="Gentles S."/>
            <person name="Goble A."/>
            <person name="Hamlin N."/>
            <person name="Harris D.E."/>
            <person name="Hidalgo J."/>
            <person name="Hodgson G."/>
            <person name="Holroyd S."/>
            <person name="Hornsby T."/>
            <person name="Howarth S."/>
            <person name="Huckle E.J."/>
            <person name="Hunt S."/>
            <person name="Jagels K."/>
            <person name="James K.D."/>
            <person name="Jones L."/>
            <person name="Jones M."/>
            <person name="Leather S."/>
            <person name="McDonald S."/>
            <person name="McLean J."/>
            <person name="Mooney P."/>
            <person name="Moule S."/>
            <person name="Mungall K.L."/>
            <person name="Murphy L.D."/>
            <person name="Niblett D."/>
            <person name="Odell C."/>
            <person name="Oliver K."/>
            <person name="O'Neil S."/>
            <person name="Pearson D."/>
            <person name="Quail M.A."/>
            <person name="Rabbinowitsch E."/>
            <person name="Rutherford K.M."/>
            <person name="Rutter S."/>
            <person name="Saunders D."/>
            <person name="Seeger K."/>
            <person name="Sharp S."/>
            <person name="Skelton J."/>
            <person name="Simmonds M.N."/>
            <person name="Squares R."/>
            <person name="Squares S."/>
            <person name="Stevens K."/>
            <person name="Taylor K."/>
            <person name="Taylor R.G."/>
            <person name="Tivey A."/>
            <person name="Walsh S.V."/>
            <person name="Warren T."/>
            <person name="Whitehead S."/>
            <person name="Woodward J.R."/>
            <person name="Volckaert G."/>
            <person name="Aert R."/>
            <person name="Robben J."/>
            <person name="Grymonprez B."/>
            <person name="Weltjens I."/>
            <person name="Vanstreels E."/>
            <person name="Rieger M."/>
            <person name="Schaefer M."/>
            <person name="Mueller-Auer S."/>
            <person name="Gabel C."/>
            <person name="Fuchs M."/>
            <person name="Duesterhoeft A."/>
            <person name="Fritzc C."/>
            <person name="Holzer E."/>
            <person name="Moestl D."/>
            <person name="Hilbert H."/>
            <person name="Borzym K."/>
            <person name="Langer I."/>
            <person name="Beck A."/>
            <person name="Lehrach H."/>
            <person name="Reinhardt R."/>
            <person name="Pohl T.M."/>
            <person name="Eger P."/>
            <person name="Zimmermann W."/>
            <person name="Wedler H."/>
            <person name="Wambutt R."/>
            <person name="Purnelle B."/>
            <person name="Goffeau A."/>
            <person name="Cadieu E."/>
            <person name="Dreano S."/>
            <person name="Gloux S."/>
            <person name="Lelaure V."/>
            <person name="Mottier S."/>
            <person name="Galibert F."/>
            <person name="Aves S.J."/>
            <person name="Xiang Z."/>
            <person name="Hunt C."/>
            <person name="Moore K."/>
            <person name="Hurst S.M."/>
            <person name="Lucas M."/>
            <person name="Rochet M."/>
            <person name="Gaillardin C."/>
            <person name="Tallada V.A."/>
            <person name="Garzon A."/>
            <person name="Thode G."/>
            <person name="Daga R.R."/>
            <person name="Cruzado L."/>
            <person name="Jimenez J."/>
            <person name="Sanchez M."/>
            <person name="del Rey F."/>
            <person name="Benito J."/>
            <person name="Dominguez A."/>
            <person name="Revuelta J.L."/>
            <person name="Moreno S."/>
            <person name="Armstrong J."/>
            <person name="Forsburg S.L."/>
            <person name="Cerutti L."/>
            <person name="Lowe T."/>
            <person name="McCombie W.R."/>
            <person name="Paulsen I."/>
            <person name="Potashkin J."/>
            <person name="Shpakovski G.V."/>
            <person name="Ussery D."/>
            <person name="Barrell B.G."/>
            <person name="Nurse P."/>
        </authorList>
    </citation>
    <scope>NUCLEOTIDE SEQUENCE [LARGE SCALE GENOMIC DNA]</scope>
    <source>
        <strain>972 / ATCC 24843</strain>
    </source>
</reference>
<sequence>MAFAWKKNFSYSKYASICSQTVRQALKPEIKNEVKTHGDAEFLYTRWKNGAQEKTESYNSAKSADKE</sequence>
<gene>
    <name type="primary">atp15</name>
    <name type="ORF">SPBC31F10.15c</name>
</gene>
<comment type="function">
    <text evidence="1">Mitochondrial membrane ATP synthase (F(1)F(0) ATP synthase or Complex V) produces ATP from ADP in the presence of a proton gradient across the membrane which is generated by electron transport complexes of the respiratory chain. F-type ATPases consist of two structural domains, F(1) - containing the extramembraneous catalytic core, and F(0) - containing the membrane proton channel, linked together by a central stalk and a peripheral stalk. During catalysis, ATP synthesis in the catalytic domain of F(1) is coupled via a rotary mechanism of the central stalk subunits to proton translocation. Part of the complex F(1) domain and of the central stalk which is part of the complex rotary element. Rotation of the central stalk against the surrounding alpha(3)beta(3) subunits leads to hydrolysis of ATP in three separate catalytic sites on the beta subunits (By similarity).</text>
</comment>
<comment type="subunit">
    <text evidence="1">F-type ATPases have 2 components, CF(1) - the catalytic core - and CF(0) - the membrane proton channel. CF(1) has five subunits: alpha(3), beta(3), gamma(1), delta(1), epsilon(1). CF(0) seems to have nine subunits: a, b, c, d, e, f, g, F6 and 8 (or A6L) (By similarity).</text>
</comment>
<comment type="subcellular location">
    <subcellularLocation>
        <location>Mitochondrion</location>
    </subcellularLocation>
    <subcellularLocation>
        <location>Mitochondrion inner membrane</location>
    </subcellularLocation>
</comment>
<comment type="similarity">
    <text evidence="2">Belongs to the eukaryotic ATPase epsilon family.</text>
</comment>
<evidence type="ECO:0000250" key="1"/>
<evidence type="ECO:0000305" key="2"/>
<name>ATP5E_SCHPO</name>
<accession>P87316</accession>
<dbReference type="EMBL" id="CU329671">
    <property type="protein sequence ID" value="CAB10091.1"/>
    <property type="molecule type" value="Genomic_DNA"/>
</dbReference>
<dbReference type="PIR" id="T40218">
    <property type="entry name" value="T40218"/>
</dbReference>
<dbReference type="RefSeq" id="NP_596577.1">
    <property type="nucleotide sequence ID" value="NM_001022498.2"/>
</dbReference>
<dbReference type="SMR" id="P87316"/>
<dbReference type="BioGRID" id="276761">
    <property type="interactions" value="77"/>
</dbReference>
<dbReference type="ComplexPortal" id="CPX-25764">
    <property type="entry name" value="Mitochondrial proton translocating ATP synthase complex"/>
</dbReference>
<dbReference type="FunCoup" id="P87316">
    <property type="interactions" value="102"/>
</dbReference>
<dbReference type="STRING" id="284812.P87316"/>
<dbReference type="iPTMnet" id="P87316"/>
<dbReference type="PaxDb" id="4896-SPBC31F10.15c.1"/>
<dbReference type="EnsemblFungi" id="SPBC31F10.15c.1">
    <property type="protein sequence ID" value="SPBC31F10.15c.1:pep"/>
    <property type="gene ID" value="SPBC31F10.15c"/>
</dbReference>
<dbReference type="GeneID" id="2540229"/>
<dbReference type="KEGG" id="spo:2540229"/>
<dbReference type="PomBase" id="SPBC31F10.15c">
    <property type="gene designation" value="atp15"/>
</dbReference>
<dbReference type="VEuPathDB" id="FungiDB:SPBC31F10.15c"/>
<dbReference type="eggNOG" id="KOG3495">
    <property type="taxonomic scope" value="Eukaryota"/>
</dbReference>
<dbReference type="HOGENOM" id="CLU_187039_0_0_1"/>
<dbReference type="InParanoid" id="P87316"/>
<dbReference type="OMA" id="AFAWKKN"/>
<dbReference type="PhylomeDB" id="P87316"/>
<dbReference type="PRO" id="PR:P87316"/>
<dbReference type="Proteomes" id="UP000002485">
    <property type="component" value="Chromosome II"/>
</dbReference>
<dbReference type="GO" id="GO:0099617">
    <property type="term" value="C:matrix side of mitochondrial inner membrane"/>
    <property type="evidence" value="ECO:0000305"/>
    <property type="project" value="PomBase"/>
</dbReference>
<dbReference type="GO" id="GO:0005743">
    <property type="term" value="C:mitochondrial inner membrane"/>
    <property type="evidence" value="ECO:0000318"/>
    <property type="project" value="GO_Central"/>
</dbReference>
<dbReference type="GO" id="GO:0005739">
    <property type="term" value="C:mitochondrion"/>
    <property type="evidence" value="ECO:0007005"/>
    <property type="project" value="PomBase"/>
</dbReference>
<dbReference type="GO" id="GO:0045259">
    <property type="term" value="C:proton-transporting ATP synthase complex"/>
    <property type="evidence" value="ECO:0000266"/>
    <property type="project" value="PomBase"/>
</dbReference>
<dbReference type="GO" id="GO:0046933">
    <property type="term" value="F:proton-transporting ATP synthase activity, rotational mechanism"/>
    <property type="evidence" value="ECO:0007669"/>
    <property type="project" value="InterPro"/>
</dbReference>
<dbReference type="GO" id="GO:0042776">
    <property type="term" value="P:proton motive force-driven mitochondrial ATP synthesis"/>
    <property type="evidence" value="ECO:0000266"/>
    <property type="project" value="PomBase"/>
</dbReference>
<dbReference type="CDD" id="cd12153">
    <property type="entry name" value="F1-ATPase_epsilon"/>
    <property type="match status" value="1"/>
</dbReference>
<dbReference type="Gene3D" id="1.10.1620.20">
    <property type="entry name" value="ATP synthase, F1 complex, epsilon subunit superfamily, mitochondrial"/>
    <property type="match status" value="1"/>
</dbReference>
<dbReference type="InterPro" id="IPR006721">
    <property type="entry name" value="ATP_synth_F1_esu_mt"/>
</dbReference>
<dbReference type="InterPro" id="IPR036742">
    <property type="entry name" value="ATP_synth_F1_esu_sf_mt"/>
</dbReference>
<dbReference type="PANTHER" id="PTHR12448">
    <property type="entry name" value="ATP SYNTHASE EPSILON CHAIN, MITOCHONDRIAL"/>
    <property type="match status" value="1"/>
</dbReference>
<dbReference type="PANTHER" id="PTHR12448:SF0">
    <property type="entry name" value="ATP SYNTHASE SUBUNIT EPSILON, MITOCHONDRIAL"/>
    <property type="match status" value="1"/>
</dbReference>
<dbReference type="Pfam" id="PF04627">
    <property type="entry name" value="ATP-synt_Eps"/>
    <property type="match status" value="1"/>
</dbReference>
<dbReference type="SUPFAM" id="SSF48690">
    <property type="entry name" value="Epsilon subunit of mitochondrial F1F0-ATP synthase"/>
    <property type="match status" value="1"/>
</dbReference>
<organism>
    <name type="scientific">Schizosaccharomyces pombe (strain 972 / ATCC 24843)</name>
    <name type="common">Fission yeast</name>
    <dbReference type="NCBI Taxonomy" id="284812"/>
    <lineage>
        <taxon>Eukaryota</taxon>
        <taxon>Fungi</taxon>
        <taxon>Dikarya</taxon>
        <taxon>Ascomycota</taxon>
        <taxon>Taphrinomycotina</taxon>
        <taxon>Schizosaccharomycetes</taxon>
        <taxon>Schizosaccharomycetales</taxon>
        <taxon>Schizosaccharomycetaceae</taxon>
        <taxon>Schizosaccharomyces</taxon>
    </lineage>
</organism>
<proteinExistence type="inferred from homology"/>
<feature type="chain" id="PRO_0000071666" description="Putative ATP synthase subunit epsilon, mitochondrial">
    <location>
        <begin position="1"/>
        <end position="67"/>
    </location>
</feature>